<organism>
    <name type="scientific">Thermus thermophilus (strain ATCC BAA-163 / DSM 7039 / HB27)</name>
    <dbReference type="NCBI Taxonomy" id="262724"/>
    <lineage>
        <taxon>Bacteria</taxon>
        <taxon>Thermotogati</taxon>
        <taxon>Deinococcota</taxon>
        <taxon>Deinococci</taxon>
        <taxon>Thermales</taxon>
        <taxon>Thermaceae</taxon>
        <taxon>Thermus</taxon>
    </lineage>
</organism>
<sequence length="282" mass="30546">MAAQVLSGHEAAEAVYEEIRARLRSLSFTPSLRVIRLGEDPASVAYVRLKDKRARALGYRSQVEVYPEDLPEEALLERIAALNADEEVDGILVQLPLPPHIRTQRVLEAIHPLKDVDGFHPLNVGRLWSGGKGLFPCTPLGVVRLLKHYGVDLRGKEVVVVGRSNIVGKPLAGLLLREDATVTLAHSKTQDLPQVTRRAQVLVVAVGRPHLVRKEWVREGAIVVDVGVNRVEGRLLGDVHPEVAEVASALTPVPGGVGPMTVAMLMGNTLEAALLRRHGASG</sequence>
<accession>Q72JL7</accession>
<keyword id="KW-0028">Amino-acid biosynthesis</keyword>
<keyword id="KW-0368">Histidine biosynthesis</keyword>
<keyword id="KW-0378">Hydrolase</keyword>
<keyword id="KW-0486">Methionine biosynthesis</keyword>
<keyword id="KW-0511">Multifunctional enzyme</keyword>
<keyword id="KW-0521">NADP</keyword>
<keyword id="KW-0554">One-carbon metabolism</keyword>
<keyword id="KW-0560">Oxidoreductase</keyword>
<keyword id="KW-0658">Purine biosynthesis</keyword>
<gene>
    <name evidence="1" type="primary">folD</name>
    <name type="ordered locus">TT_C0755</name>
</gene>
<dbReference type="EC" id="1.5.1.5" evidence="1"/>
<dbReference type="EC" id="3.5.4.9" evidence="1"/>
<dbReference type="EMBL" id="AE017221">
    <property type="protein sequence ID" value="AAS81101.1"/>
    <property type="molecule type" value="Genomic_DNA"/>
</dbReference>
<dbReference type="RefSeq" id="WP_011173191.1">
    <property type="nucleotide sequence ID" value="NC_005835.1"/>
</dbReference>
<dbReference type="SMR" id="Q72JL7"/>
<dbReference type="KEGG" id="tth:TT_C0755"/>
<dbReference type="eggNOG" id="COG0190">
    <property type="taxonomic scope" value="Bacteria"/>
</dbReference>
<dbReference type="HOGENOM" id="CLU_034045_2_1_0"/>
<dbReference type="OrthoDB" id="9803580at2"/>
<dbReference type="UniPathway" id="UPA00193"/>
<dbReference type="Proteomes" id="UP000000592">
    <property type="component" value="Chromosome"/>
</dbReference>
<dbReference type="GO" id="GO:0005829">
    <property type="term" value="C:cytosol"/>
    <property type="evidence" value="ECO:0007669"/>
    <property type="project" value="TreeGrafter"/>
</dbReference>
<dbReference type="GO" id="GO:0004477">
    <property type="term" value="F:methenyltetrahydrofolate cyclohydrolase activity"/>
    <property type="evidence" value="ECO:0007669"/>
    <property type="project" value="UniProtKB-UniRule"/>
</dbReference>
<dbReference type="GO" id="GO:0004488">
    <property type="term" value="F:methylenetetrahydrofolate dehydrogenase (NADP+) activity"/>
    <property type="evidence" value="ECO:0007669"/>
    <property type="project" value="UniProtKB-UniRule"/>
</dbReference>
<dbReference type="GO" id="GO:0000105">
    <property type="term" value="P:L-histidine biosynthetic process"/>
    <property type="evidence" value="ECO:0007669"/>
    <property type="project" value="UniProtKB-KW"/>
</dbReference>
<dbReference type="GO" id="GO:0009086">
    <property type="term" value="P:methionine biosynthetic process"/>
    <property type="evidence" value="ECO:0007669"/>
    <property type="project" value="UniProtKB-KW"/>
</dbReference>
<dbReference type="GO" id="GO:0006164">
    <property type="term" value="P:purine nucleotide biosynthetic process"/>
    <property type="evidence" value="ECO:0007669"/>
    <property type="project" value="UniProtKB-KW"/>
</dbReference>
<dbReference type="GO" id="GO:0035999">
    <property type="term" value="P:tetrahydrofolate interconversion"/>
    <property type="evidence" value="ECO:0007669"/>
    <property type="project" value="UniProtKB-UniRule"/>
</dbReference>
<dbReference type="CDD" id="cd01080">
    <property type="entry name" value="NAD_bind_m-THF_DH_Cyclohyd"/>
    <property type="match status" value="1"/>
</dbReference>
<dbReference type="FunFam" id="3.40.50.720:FF:000094">
    <property type="entry name" value="Bifunctional protein FolD"/>
    <property type="match status" value="1"/>
</dbReference>
<dbReference type="FunFam" id="3.40.50.10860:FF:000005">
    <property type="entry name" value="C-1-tetrahydrofolate synthase, cytoplasmic, putative"/>
    <property type="match status" value="1"/>
</dbReference>
<dbReference type="Gene3D" id="3.40.50.10860">
    <property type="entry name" value="Leucine Dehydrogenase, chain A, domain 1"/>
    <property type="match status" value="1"/>
</dbReference>
<dbReference type="Gene3D" id="3.40.50.720">
    <property type="entry name" value="NAD(P)-binding Rossmann-like Domain"/>
    <property type="match status" value="1"/>
</dbReference>
<dbReference type="HAMAP" id="MF_01576">
    <property type="entry name" value="THF_DHG_CYH"/>
    <property type="match status" value="1"/>
</dbReference>
<dbReference type="InterPro" id="IPR046346">
    <property type="entry name" value="Aminoacid_DH-like_N_sf"/>
</dbReference>
<dbReference type="InterPro" id="IPR036291">
    <property type="entry name" value="NAD(P)-bd_dom_sf"/>
</dbReference>
<dbReference type="InterPro" id="IPR000672">
    <property type="entry name" value="THF_DH/CycHdrlase"/>
</dbReference>
<dbReference type="InterPro" id="IPR020630">
    <property type="entry name" value="THF_DH/CycHdrlase_cat_dom"/>
</dbReference>
<dbReference type="InterPro" id="IPR020867">
    <property type="entry name" value="THF_DH/CycHdrlase_CS"/>
</dbReference>
<dbReference type="InterPro" id="IPR020631">
    <property type="entry name" value="THF_DH/CycHdrlase_NAD-bd_dom"/>
</dbReference>
<dbReference type="NCBIfam" id="NF010770">
    <property type="entry name" value="PRK14173.1"/>
    <property type="match status" value="1"/>
</dbReference>
<dbReference type="PANTHER" id="PTHR48099:SF5">
    <property type="entry name" value="C-1-TETRAHYDROFOLATE SYNTHASE, CYTOPLASMIC"/>
    <property type="match status" value="1"/>
</dbReference>
<dbReference type="PANTHER" id="PTHR48099">
    <property type="entry name" value="C-1-TETRAHYDROFOLATE SYNTHASE, CYTOPLASMIC-RELATED"/>
    <property type="match status" value="1"/>
</dbReference>
<dbReference type="Pfam" id="PF00763">
    <property type="entry name" value="THF_DHG_CYH"/>
    <property type="match status" value="1"/>
</dbReference>
<dbReference type="Pfam" id="PF02882">
    <property type="entry name" value="THF_DHG_CYH_C"/>
    <property type="match status" value="1"/>
</dbReference>
<dbReference type="PRINTS" id="PR00085">
    <property type="entry name" value="THFDHDRGNASE"/>
</dbReference>
<dbReference type="SUPFAM" id="SSF53223">
    <property type="entry name" value="Aminoacid dehydrogenase-like, N-terminal domain"/>
    <property type="match status" value="1"/>
</dbReference>
<dbReference type="SUPFAM" id="SSF51735">
    <property type="entry name" value="NAD(P)-binding Rossmann-fold domains"/>
    <property type="match status" value="1"/>
</dbReference>
<dbReference type="PROSITE" id="PS00767">
    <property type="entry name" value="THF_DHG_CYH_2"/>
    <property type="match status" value="1"/>
</dbReference>
<feature type="chain" id="PRO_0000268545" description="Bifunctional protein FolD">
    <location>
        <begin position="1"/>
        <end position="282"/>
    </location>
</feature>
<feature type="binding site" evidence="1">
    <location>
        <begin position="162"/>
        <end position="164"/>
    </location>
    <ligand>
        <name>NADP(+)</name>
        <dbReference type="ChEBI" id="CHEBI:58349"/>
    </ligand>
</feature>
<feature type="binding site" evidence="1">
    <location>
        <position position="187"/>
    </location>
    <ligand>
        <name>NADP(+)</name>
        <dbReference type="ChEBI" id="CHEBI:58349"/>
    </ligand>
</feature>
<feature type="binding site" evidence="1">
    <location>
        <position position="228"/>
    </location>
    <ligand>
        <name>NADP(+)</name>
        <dbReference type="ChEBI" id="CHEBI:58349"/>
    </ligand>
</feature>
<evidence type="ECO:0000255" key="1">
    <source>
        <dbReference type="HAMAP-Rule" id="MF_01576"/>
    </source>
</evidence>
<reference key="1">
    <citation type="journal article" date="2004" name="Nat. Biotechnol.">
        <title>The genome sequence of the extreme thermophile Thermus thermophilus.</title>
        <authorList>
            <person name="Henne A."/>
            <person name="Brueggemann H."/>
            <person name="Raasch C."/>
            <person name="Wiezer A."/>
            <person name="Hartsch T."/>
            <person name="Liesegang H."/>
            <person name="Johann A."/>
            <person name="Lienard T."/>
            <person name="Gohl O."/>
            <person name="Martinez-Arias R."/>
            <person name="Jacobi C."/>
            <person name="Starkuviene V."/>
            <person name="Schlenczeck S."/>
            <person name="Dencker S."/>
            <person name="Huber R."/>
            <person name="Klenk H.-P."/>
            <person name="Kramer W."/>
            <person name="Merkl R."/>
            <person name="Gottschalk G."/>
            <person name="Fritz H.-J."/>
        </authorList>
    </citation>
    <scope>NUCLEOTIDE SEQUENCE [LARGE SCALE GENOMIC DNA]</scope>
    <source>
        <strain>ATCC BAA-163 / DSM 7039 / HB27</strain>
    </source>
</reference>
<comment type="function">
    <text evidence="1">Catalyzes the oxidation of 5,10-methylenetetrahydrofolate to 5,10-methenyltetrahydrofolate and then the hydrolysis of 5,10-methenyltetrahydrofolate to 10-formyltetrahydrofolate.</text>
</comment>
<comment type="catalytic activity">
    <reaction evidence="1">
        <text>(6R)-5,10-methylene-5,6,7,8-tetrahydrofolate + NADP(+) = (6R)-5,10-methenyltetrahydrofolate + NADPH</text>
        <dbReference type="Rhea" id="RHEA:22812"/>
        <dbReference type="ChEBI" id="CHEBI:15636"/>
        <dbReference type="ChEBI" id="CHEBI:57455"/>
        <dbReference type="ChEBI" id="CHEBI:57783"/>
        <dbReference type="ChEBI" id="CHEBI:58349"/>
        <dbReference type="EC" id="1.5.1.5"/>
    </reaction>
</comment>
<comment type="catalytic activity">
    <reaction evidence="1">
        <text>(6R)-5,10-methenyltetrahydrofolate + H2O = (6R)-10-formyltetrahydrofolate + H(+)</text>
        <dbReference type="Rhea" id="RHEA:23700"/>
        <dbReference type="ChEBI" id="CHEBI:15377"/>
        <dbReference type="ChEBI" id="CHEBI:15378"/>
        <dbReference type="ChEBI" id="CHEBI:57455"/>
        <dbReference type="ChEBI" id="CHEBI:195366"/>
        <dbReference type="EC" id="3.5.4.9"/>
    </reaction>
</comment>
<comment type="pathway">
    <text evidence="1">One-carbon metabolism; tetrahydrofolate interconversion.</text>
</comment>
<comment type="subunit">
    <text evidence="1">Homodimer.</text>
</comment>
<comment type="similarity">
    <text evidence="1">Belongs to the tetrahydrofolate dehydrogenase/cyclohydrolase family.</text>
</comment>
<protein>
    <recommendedName>
        <fullName evidence="1">Bifunctional protein FolD</fullName>
    </recommendedName>
    <domain>
        <recommendedName>
            <fullName evidence="1">Methylenetetrahydrofolate dehydrogenase</fullName>
            <ecNumber evidence="1">1.5.1.5</ecNumber>
        </recommendedName>
    </domain>
    <domain>
        <recommendedName>
            <fullName evidence="1">Methenyltetrahydrofolate cyclohydrolase</fullName>
            <ecNumber evidence="1">3.5.4.9</ecNumber>
        </recommendedName>
    </domain>
</protein>
<proteinExistence type="inferred from homology"/>
<name>FOLD_THET2</name>